<feature type="chain" id="PRO_1000200646" description="NAD(P)H dehydrogenase (quinone)">
    <location>
        <begin position="1"/>
        <end position="198"/>
    </location>
</feature>
<feature type="domain" description="Flavodoxin-like" evidence="1">
    <location>
        <begin position="4"/>
        <end position="189"/>
    </location>
</feature>
<feature type="binding site" evidence="1">
    <location>
        <begin position="10"/>
        <end position="15"/>
    </location>
    <ligand>
        <name>FMN</name>
        <dbReference type="ChEBI" id="CHEBI:58210"/>
    </ligand>
</feature>
<feature type="binding site" evidence="1">
    <location>
        <position position="12"/>
    </location>
    <ligand>
        <name>NAD(+)</name>
        <dbReference type="ChEBI" id="CHEBI:57540"/>
    </ligand>
</feature>
<feature type="binding site" evidence="1">
    <location>
        <begin position="78"/>
        <end position="80"/>
    </location>
    <ligand>
        <name>FMN</name>
        <dbReference type="ChEBI" id="CHEBI:58210"/>
    </ligand>
</feature>
<feature type="binding site" evidence="1">
    <location>
        <position position="98"/>
    </location>
    <ligand>
        <name>substrate</name>
    </ligand>
</feature>
<feature type="binding site" evidence="1">
    <location>
        <begin position="113"/>
        <end position="118"/>
    </location>
    <ligand>
        <name>FMN</name>
        <dbReference type="ChEBI" id="CHEBI:58210"/>
    </ligand>
</feature>
<feature type="binding site" evidence="1">
    <location>
        <position position="133"/>
    </location>
    <ligand>
        <name>FMN</name>
        <dbReference type="ChEBI" id="CHEBI:58210"/>
    </ligand>
</feature>
<proteinExistence type="inferred from homology"/>
<dbReference type="EC" id="1.6.5.2" evidence="1"/>
<dbReference type="EMBL" id="FM200053">
    <property type="protein sequence ID" value="CAR59797.1"/>
    <property type="molecule type" value="Genomic_DNA"/>
</dbReference>
<dbReference type="SMR" id="B5BBG6"/>
<dbReference type="KEGG" id="sek:SSPA1609"/>
<dbReference type="HOGENOM" id="CLU_051402_0_2_6"/>
<dbReference type="Proteomes" id="UP000001869">
    <property type="component" value="Chromosome"/>
</dbReference>
<dbReference type="GO" id="GO:0016020">
    <property type="term" value="C:membrane"/>
    <property type="evidence" value="ECO:0007669"/>
    <property type="project" value="TreeGrafter"/>
</dbReference>
<dbReference type="GO" id="GO:0050660">
    <property type="term" value="F:flavin adenine dinucleotide binding"/>
    <property type="evidence" value="ECO:0007669"/>
    <property type="project" value="UniProtKB-UniRule"/>
</dbReference>
<dbReference type="GO" id="GO:0010181">
    <property type="term" value="F:FMN binding"/>
    <property type="evidence" value="ECO:0007669"/>
    <property type="project" value="InterPro"/>
</dbReference>
<dbReference type="GO" id="GO:0051287">
    <property type="term" value="F:NAD binding"/>
    <property type="evidence" value="ECO:0007669"/>
    <property type="project" value="UniProtKB-UniRule"/>
</dbReference>
<dbReference type="GO" id="GO:0050136">
    <property type="term" value="F:NADH:ubiquinone reductase (non-electrogenic) activity"/>
    <property type="evidence" value="ECO:0007669"/>
    <property type="project" value="RHEA"/>
</dbReference>
<dbReference type="GO" id="GO:0050661">
    <property type="term" value="F:NADP binding"/>
    <property type="evidence" value="ECO:0007669"/>
    <property type="project" value="UniProtKB-UniRule"/>
</dbReference>
<dbReference type="GO" id="GO:0008753">
    <property type="term" value="F:NADPH dehydrogenase (quinone) activity"/>
    <property type="evidence" value="ECO:0007669"/>
    <property type="project" value="RHEA"/>
</dbReference>
<dbReference type="FunFam" id="3.40.50.360:FF:000004">
    <property type="entry name" value="NAD(P)H dehydrogenase (quinone)"/>
    <property type="match status" value="1"/>
</dbReference>
<dbReference type="Gene3D" id="3.40.50.360">
    <property type="match status" value="1"/>
</dbReference>
<dbReference type="HAMAP" id="MF_01017">
    <property type="entry name" value="NQOR"/>
    <property type="match status" value="1"/>
</dbReference>
<dbReference type="InterPro" id="IPR008254">
    <property type="entry name" value="Flavodoxin/NO_synth"/>
</dbReference>
<dbReference type="InterPro" id="IPR029039">
    <property type="entry name" value="Flavoprotein-like_sf"/>
</dbReference>
<dbReference type="InterPro" id="IPR010089">
    <property type="entry name" value="Flavoprotein_WrbA-like"/>
</dbReference>
<dbReference type="InterPro" id="IPR005025">
    <property type="entry name" value="FMN_Rdtase-like_dom"/>
</dbReference>
<dbReference type="InterPro" id="IPR037513">
    <property type="entry name" value="NQO"/>
</dbReference>
<dbReference type="NCBIfam" id="TIGR01755">
    <property type="entry name" value="flav_wrbA"/>
    <property type="match status" value="1"/>
</dbReference>
<dbReference type="NCBIfam" id="NF002999">
    <property type="entry name" value="PRK03767.1"/>
    <property type="match status" value="1"/>
</dbReference>
<dbReference type="PANTHER" id="PTHR30546">
    <property type="entry name" value="FLAVODOXIN-RELATED PROTEIN WRBA-RELATED"/>
    <property type="match status" value="1"/>
</dbReference>
<dbReference type="PANTHER" id="PTHR30546:SF23">
    <property type="entry name" value="FLAVOPROTEIN-LIKE PROTEIN YCP4-RELATED"/>
    <property type="match status" value="1"/>
</dbReference>
<dbReference type="Pfam" id="PF03358">
    <property type="entry name" value="FMN_red"/>
    <property type="match status" value="1"/>
</dbReference>
<dbReference type="SUPFAM" id="SSF52218">
    <property type="entry name" value="Flavoproteins"/>
    <property type="match status" value="1"/>
</dbReference>
<dbReference type="PROSITE" id="PS50902">
    <property type="entry name" value="FLAVODOXIN_LIKE"/>
    <property type="match status" value="1"/>
</dbReference>
<evidence type="ECO:0000255" key="1">
    <source>
        <dbReference type="HAMAP-Rule" id="MF_01017"/>
    </source>
</evidence>
<comment type="catalytic activity">
    <reaction evidence="1">
        <text>a quinone + NADH + H(+) = a quinol + NAD(+)</text>
        <dbReference type="Rhea" id="RHEA:46160"/>
        <dbReference type="ChEBI" id="CHEBI:15378"/>
        <dbReference type="ChEBI" id="CHEBI:24646"/>
        <dbReference type="ChEBI" id="CHEBI:57540"/>
        <dbReference type="ChEBI" id="CHEBI:57945"/>
        <dbReference type="ChEBI" id="CHEBI:132124"/>
        <dbReference type="EC" id="1.6.5.2"/>
    </reaction>
</comment>
<comment type="catalytic activity">
    <reaction evidence="1">
        <text>a quinone + NADPH + H(+) = a quinol + NADP(+)</text>
        <dbReference type="Rhea" id="RHEA:46164"/>
        <dbReference type="ChEBI" id="CHEBI:15378"/>
        <dbReference type="ChEBI" id="CHEBI:24646"/>
        <dbReference type="ChEBI" id="CHEBI:57783"/>
        <dbReference type="ChEBI" id="CHEBI:58349"/>
        <dbReference type="ChEBI" id="CHEBI:132124"/>
        <dbReference type="EC" id="1.6.5.2"/>
    </reaction>
</comment>
<comment type="cofactor">
    <cofactor evidence="1">
        <name>FMN</name>
        <dbReference type="ChEBI" id="CHEBI:58210"/>
    </cofactor>
    <text evidence="1">Binds 1 FMN per monomer.</text>
</comment>
<comment type="similarity">
    <text evidence="1">Belongs to the WrbA family.</text>
</comment>
<name>NQOR_SALPK</name>
<accession>B5BBG6</accession>
<reference key="1">
    <citation type="journal article" date="2009" name="BMC Genomics">
        <title>Pseudogene accumulation in the evolutionary histories of Salmonella enterica serovars Paratyphi A and Typhi.</title>
        <authorList>
            <person name="Holt K.E."/>
            <person name="Thomson N.R."/>
            <person name="Wain J."/>
            <person name="Langridge G.C."/>
            <person name="Hasan R."/>
            <person name="Bhutta Z.A."/>
            <person name="Quail M.A."/>
            <person name="Norbertczak H."/>
            <person name="Walker D."/>
            <person name="Simmonds M."/>
            <person name="White B."/>
            <person name="Bason N."/>
            <person name="Mungall K."/>
            <person name="Dougan G."/>
            <person name="Parkhill J."/>
        </authorList>
    </citation>
    <scope>NUCLEOTIDE SEQUENCE [LARGE SCALE GENOMIC DNA]</scope>
    <source>
        <strain>AKU_12601</strain>
    </source>
</reference>
<protein>
    <recommendedName>
        <fullName evidence="1">NAD(P)H dehydrogenase (quinone)</fullName>
        <ecNumber evidence="1">1.6.5.2</ecNumber>
    </recommendedName>
    <alternativeName>
        <fullName>Flavoprotein WrbA</fullName>
    </alternativeName>
    <alternativeName>
        <fullName evidence="1">NAD(P)H:quinone oxidoreductase</fullName>
        <shortName evidence="1">NQO</shortName>
    </alternativeName>
</protein>
<gene>
    <name type="ordered locus">SSPA1609</name>
</gene>
<keyword id="KW-0285">Flavoprotein</keyword>
<keyword id="KW-0288">FMN</keyword>
<keyword id="KW-0520">NAD</keyword>
<keyword id="KW-0521">NADP</keyword>
<keyword id="KW-0547">Nucleotide-binding</keyword>
<keyword id="KW-0560">Oxidoreductase</keyword>
<organism>
    <name type="scientific">Salmonella paratyphi A (strain AKU_12601)</name>
    <dbReference type="NCBI Taxonomy" id="554290"/>
    <lineage>
        <taxon>Bacteria</taxon>
        <taxon>Pseudomonadati</taxon>
        <taxon>Pseudomonadota</taxon>
        <taxon>Gammaproteobacteria</taxon>
        <taxon>Enterobacterales</taxon>
        <taxon>Enterobacteriaceae</taxon>
        <taxon>Salmonella</taxon>
    </lineage>
</organism>
<sequence>MAKILVLYYSMYGHIETMAHAVAEGAKKVDGAEVIIKRVPETMPPEIFAKAGGKTQNAPVATPQELADYDAIIFGTPTRFGNMPGQMRTFLDQTGGLWASGALYGKLGSVFSSTGTGGGQEQTITSTWTTLAHHGMVIVPIGYAAQELFDVSQVRGGTPYGATTIAGGDGSRQPSQEELSIARYQGEYVAGLAVKLNG</sequence>